<dbReference type="EC" id="2.7.7.6" evidence="1"/>
<dbReference type="EMBL" id="AP009351">
    <property type="protein sequence ID" value="BAF66776.1"/>
    <property type="molecule type" value="Genomic_DNA"/>
</dbReference>
<dbReference type="RefSeq" id="WP_000918667.1">
    <property type="nucleotide sequence ID" value="NZ_JBBIAE010000002.1"/>
</dbReference>
<dbReference type="SMR" id="A6QEJ4"/>
<dbReference type="KEGG" id="sae:NWMN_0504"/>
<dbReference type="HOGENOM" id="CLU_000524_4_1_9"/>
<dbReference type="Proteomes" id="UP000006386">
    <property type="component" value="Chromosome"/>
</dbReference>
<dbReference type="GO" id="GO:0000428">
    <property type="term" value="C:DNA-directed RNA polymerase complex"/>
    <property type="evidence" value="ECO:0007669"/>
    <property type="project" value="UniProtKB-KW"/>
</dbReference>
<dbReference type="GO" id="GO:0003677">
    <property type="term" value="F:DNA binding"/>
    <property type="evidence" value="ECO:0007669"/>
    <property type="project" value="UniProtKB-UniRule"/>
</dbReference>
<dbReference type="GO" id="GO:0003899">
    <property type="term" value="F:DNA-directed RNA polymerase activity"/>
    <property type="evidence" value="ECO:0007669"/>
    <property type="project" value="UniProtKB-UniRule"/>
</dbReference>
<dbReference type="GO" id="GO:0032549">
    <property type="term" value="F:ribonucleoside binding"/>
    <property type="evidence" value="ECO:0007669"/>
    <property type="project" value="InterPro"/>
</dbReference>
<dbReference type="GO" id="GO:0006351">
    <property type="term" value="P:DNA-templated transcription"/>
    <property type="evidence" value="ECO:0007669"/>
    <property type="project" value="UniProtKB-UniRule"/>
</dbReference>
<dbReference type="CDD" id="cd00653">
    <property type="entry name" value="RNA_pol_B_RPB2"/>
    <property type="match status" value="1"/>
</dbReference>
<dbReference type="FunFam" id="3.90.1800.10:FF:000001">
    <property type="entry name" value="DNA-directed RNA polymerase subunit beta"/>
    <property type="match status" value="1"/>
</dbReference>
<dbReference type="Gene3D" id="2.40.50.100">
    <property type="match status" value="1"/>
</dbReference>
<dbReference type="Gene3D" id="2.40.50.150">
    <property type="match status" value="1"/>
</dbReference>
<dbReference type="Gene3D" id="3.90.1100.10">
    <property type="match status" value="3"/>
</dbReference>
<dbReference type="Gene3D" id="2.40.270.10">
    <property type="entry name" value="DNA-directed RNA polymerase, subunit 2, domain 6"/>
    <property type="match status" value="1"/>
</dbReference>
<dbReference type="Gene3D" id="3.90.1800.10">
    <property type="entry name" value="RNA polymerase alpha subunit dimerisation domain"/>
    <property type="match status" value="1"/>
</dbReference>
<dbReference type="Gene3D" id="3.90.1110.10">
    <property type="entry name" value="RNA polymerase Rpb2, domain 2"/>
    <property type="match status" value="1"/>
</dbReference>
<dbReference type="HAMAP" id="MF_01321">
    <property type="entry name" value="RNApol_bact_RpoB"/>
    <property type="match status" value="1"/>
</dbReference>
<dbReference type="InterPro" id="IPR019462">
    <property type="entry name" value="DNA-dir_RNA_pol_bsu_external_1"/>
</dbReference>
<dbReference type="InterPro" id="IPR015712">
    <property type="entry name" value="DNA-dir_RNA_pol_su2"/>
</dbReference>
<dbReference type="InterPro" id="IPR007120">
    <property type="entry name" value="DNA-dir_RNAP_su2_dom"/>
</dbReference>
<dbReference type="InterPro" id="IPR037033">
    <property type="entry name" value="DNA-dir_RNAP_su2_hyb_sf"/>
</dbReference>
<dbReference type="InterPro" id="IPR010243">
    <property type="entry name" value="RNA_pol_bsu_bac"/>
</dbReference>
<dbReference type="InterPro" id="IPR007121">
    <property type="entry name" value="RNA_pol_bsu_CS"/>
</dbReference>
<dbReference type="InterPro" id="IPR007644">
    <property type="entry name" value="RNA_pol_bsu_protrusion"/>
</dbReference>
<dbReference type="InterPro" id="IPR007642">
    <property type="entry name" value="RNA_pol_Rpb2_2"/>
</dbReference>
<dbReference type="InterPro" id="IPR037034">
    <property type="entry name" value="RNA_pol_Rpb2_2_sf"/>
</dbReference>
<dbReference type="InterPro" id="IPR007645">
    <property type="entry name" value="RNA_pol_Rpb2_3"/>
</dbReference>
<dbReference type="InterPro" id="IPR007641">
    <property type="entry name" value="RNA_pol_Rpb2_7"/>
</dbReference>
<dbReference type="InterPro" id="IPR014724">
    <property type="entry name" value="RNA_pol_RPB2_OB-fold"/>
</dbReference>
<dbReference type="NCBIfam" id="NF001616">
    <property type="entry name" value="PRK00405.1"/>
    <property type="match status" value="1"/>
</dbReference>
<dbReference type="NCBIfam" id="TIGR02013">
    <property type="entry name" value="rpoB"/>
    <property type="match status" value="1"/>
</dbReference>
<dbReference type="PANTHER" id="PTHR20856">
    <property type="entry name" value="DNA-DIRECTED RNA POLYMERASE I SUBUNIT 2"/>
    <property type="match status" value="1"/>
</dbReference>
<dbReference type="Pfam" id="PF04563">
    <property type="entry name" value="RNA_pol_Rpb2_1"/>
    <property type="match status" value="1"/>
</dbReference>
<dbReference type="Pfam" id="PF04561">
    <property type="entry name" value="RNA_pol_Rpb2_2"/>
    <property type="match status" value="2"/>
</dbReference>
<dbReference type="Pfam" id="PF04565">
    <property type="entry name" value="RNA_pol_Rpb2_3"/>
    <property type="match status" value="1"/>
</dbReference>
<dbReference type="Pfam" id="PF10385">
    <property type="entry name" value="RNA_pol_Rpb2_45"/>
    <property type="match status" value="1"/>
</dbReference>
<dbReference type="Pfam" id="PF00562">
    <property type="entry name" value="RNA_pol_Rpb2_6"/>
    <property type="match status" value="1"/>
</dbReference>
<dbReference type="Pfam" id="PF04560">
    <property type="entry name" value="RNA_pol_Rpb2_7"/>
    <property type="match status" value="1"/>
</dbReference>
<dbReference type="SUPFAM" id="SSF64484">
    <property type="entry name" value="beta and beta-prime subunits of DNA dependent RNA-polymerase"/>
    <property type="match status" value="1"/>
</dbReference>
<dbReference type="PROSITE" id="PS01166">
    <property type="entry name" value="RNA_POL_BETA"/>
    <property type="match status" value="1"/>
</dbReference>
<feature type="chain" id="PRO_1000073241" description="DNA-directed RNA polymerase subunit beta">
    <location>
        <begin position="1"/>
        <end position="1183"/>
    </location>
</feature>
<gene>
    <name evidence="1" type="primary">rpoB</name>
    <name type="ordered locus">NWMN_0504</name>
</gene>
<organism>
    <name type="scientific">Staphylococcus aureus (strain Newman)</name>
    <dbReference type="NCBI Taxonomy" id="426430"/>
    <lineage>
        <taxon>Bacteria</taxon>
        <taxon>Bacillati</taxon>
        <taxon>Bacillota</taxon>
        <taxon>Bacilli</taxon>
        <taxon>Bacillales</taxon>
        <taxon>Staphylococcaceae</taxon>
        <taxon>Staphylococcus</taxon>
    </lineage>
</organism>
<comment type="function">
    <text evidence="1">DNA-dependent RNA polymerase catalyzes the transcription of DNA into RNA using the four ribonucleoside triphosphates as substrates.</text>
</comment>
<comment type="catalytic activity">
    <reaction evidence="1">
        <text>RNA(n) + a ribonucleoside 5'-triphosphate = RNA(n+1) + diphosphate</text>
        <dbReference type="Rhea" id="RHEA:21248"/>
        <dbReference type="Rhea" id="RHEA-COMP:14527"/>
        <dbReference type="Rhea" id="RHEA-COMP:17342"/>
        <dbReference type="ChEBI" id="CHEBI:33019"/>
        <dbReference type="ChEBI" id="CHEBI:61557"/>
        <dbReference type="ChEBI" id="CHEBI:140395"/>
        <dbReference type="EC" id="2.7.7.6"/>
    </reaction>
</comment>
<comment type="subunit">
    <text evidence="1">The RNAP catalytic core consists of 2 alpha, 1 beta, 1 beta' and 1 omega subunit. When a sigma factor is associated with the core the holoenzyme is formed, which can initiate transcription.</text>
</comment>
<comment type="similarity">
    <text evidence="1">Belongs to the RNA polymerase beta chain family.</text>
</comment>
<sequence>MAGQVVQYGRHRKRRNYARISEVLELPNLIEIQTKSYEWFLREGLIEMFRDISPIEDFTGNLSLEFVDYRLGEPKYDLEESKNRDATYAAPLRVKVRLIIKETGEVKEQEVFMGDFPLMTDTGTFVINGAERVIVSQLVRSPSVYFNEKIDKNGRENYDATIIPNRGAWLEYETDAKDVVYVRIDRTRKLPLTVLLRALGFSSDQEIVDLLGDNEYLRNTLEKDGTENTEQALLEIYERLRPGEPPTVENAKSLLYSRFFDPKRYDLASVGRYKTNKKLHLKHRLFNQKLAEPIVNTETGEIVVEEGTVLDRRKIDEIMDVLESNANSEVFELHGSVIDEPVEIQSIKVYVPNDDEGRTTTVIGNAFPDSEVKCITPADIIASMSYFFNLLSGIGYTDDIDHLGNRRLRSVGELLQNQFRIGLSRMERVVRERMSIQDTESITPQQLINIRPVIASIKEFFGSSQLSQFMDQANPLAELTHKRRLSALGPGGLTRERAQMEVRDVHYSHYGRMCPIETPEGPNIGLINSLSSYARVNEFGFIETPYRKVDLDTHAITDQIDYLTADEEDSYVVAQANSKLDENGRFMDDEVVCRFRGNNTVMAKEKMDYMDVSPKQVVSAATACIPFLENDDSNRALMGANMQRQAVPLMNPEAPFVGTGMEHVAARDSGAAITAKHRGRVEHVESNEILVRRLVEENGVEHEGELDRYPLAKFKRSNSGTCYNQRPIVAVGDVVEYNEILADGPSMELGEMALGRNVVVGFMTWDGYNYEDAVIMSERLVKDDVYTSIHIEEYESEARDTKLGPEEITRDIPNVSESALKNLDDRGIVYIGAEVKDGDILVGKVTPKGVTELTAEERLLHAIFGEKAREVRDTSLRVPHGAGGIVLDVKVFNREEGDDTLSPGVNQLVRVYIVQKRKIHVGDKMCGRHGNKGVISKIVPEEDMPYLPDGRPIDIMLNPLGVPSRMNIGQVLELHLGMAAKNLGIHVASPVFDGANDDDVWSTIEEAGMARDGKTVLYDGRTGEPFDNRISVGVMYMLKLAHMVDDKLHARSTGPYSLVTQQPLGGKAQFGGQRFGEMEVWALEAYGAAYTLQEILTYKSDDTVGRVKTYEAIVKGENISRPSVPESFRVLMKELQSLGLDVKVMDEQDNEIEMTDVDDDDVVERKVDLQQNDAPETQKEVTD</sequence>
<name>RPOB_STAAE</name>
<accession>A6QEJ4</accession>
<proteinExistence type="inferred from homology"/>
<reference key="1">
    <citation type="journal article" date="2008" name="J. Bacteriol.">
        <title>Genome sequence of Staphylococcus aureus strain Newman and comparative analysis of staphylococcal genomes: polymorphism and evolution of two major pathogenicity islands.</title>
        <authorList>
            <person name="Baba T."/>
            <person name="Bae T."/>
            <person name="Schneewind O."/>
            <person name="Takeuchi F."/>
            <person name="Hiramatsu K."/>
        </authorList>
    </citation>
    <scope>NUCLEOTIDE SEQUENCE [LARGE SCALE GENOMIC DNA]</scope>
    <source>
        <strain>Newman</strain>
    </source>
</reference>
<evidence type="ECO:0000255" key="1">
    <source>
        <dbReference type="HAMAP-Rule" id="MF_01321"/>
    </source>
</evidence>
<keyword id="KW-0240">DNA-directed RNA polymerase</keyword>
<keyword id="KW-0548">Nucleotidyltransferase</keyword>
<keyword id="KW-0804">Transcription</keyword>
<keyword id="KW-0808">Transferase</keyword>
<protein>
    <recommendedName>
        <fullName evidence="1">DNA-directed RNA polymerase subunit beta</fullName>
        <shortName evidence="1">RNAP subunit beta</shortName>
        <ecNumber evidence="1">2.7.7.6</ecNumber>
    </recommendedName>
    <alternativeName>
        <fullName evidence="1">RNA polymerase subunit beta</fullName>
    </alternativeName>
    <alternativeName>
        <fullName evidence="1">Transcriptase subunit beta</fullName>
    </alternativeName>
</protein>